<reference key="1">
    <citation type="journal article" date="2008" name="PLoS Genet.">
        <title>Complete genome sequence of the complex carbohydrate-degrading marine bacterium, Saccharophagus degradans strain 2-40 T.</title>
        <authorList>
            <person name="Weiner R.M."/>
            <person name="Taylor L.E. II"/>
            <person name="Henrissat B."/>
            <person name="Hauser L."/>
            <person name="Land M."/>
            <person name="Coutinho P.M."/>
            <person name="Rancurel C."/>
            <person name="Saunders E.H."/>
            <person name="Longmire A.G."/>
            <person name="Zhang H."/>
            <person name="Bayer E.A."/>
            <person name="Gilbert H.J."/>
            <person name="Larimer F."/>
            <person name="Zhulin I.B."/>
            <person name="Ekborg N.A."/>
            <person name="Lamed R."/>
            <person name="Richardson P.M."/>
            <person name="Borovok I."/>
            <person name="Hutcheson S."/>
        </authorList>
    </citation>
    <scope>NUCLEOTIDE SEQUENCE [LARGE SCALE GENOMIC DNA]</scope>
    <source>
        <strain>2-40 / ATCC 43961 / DSM 17024</strain>
    </source>
</reference>
<evidence type="ECO:0000255" key="1">
    <source>
        <dbReference type="HAMAP-Rule" id="MF_01588"/>
    </source>
</evidence>
<gene>
    <name evidence="1" type="primary">ligA</name>
    <name type="ordered locus">Sde_1881</name>
</gene>
<proteinExistence type="inferred from homology"/>
<accession>Q21JI8</accession>
<keyword id="KW-0227">DNA damage</keyword>
<keyword id="KW-0234">DNA repair</keyword>
<keyword id="KW-0235">DNA replication</keyword>
<keyword id="KW-0436">Ligase</keyword>
<keyword id="KW-0460">Magnesium</keyword>
<keyword id="KW-0464">Manganese</keyword>
<keyword id="KW-0479">Metal-binding</keyword>
<keyword id="KW-0520">NAD</keyword>
<keyword id="KW-1185">Reference proteome</keyword>
<keyword id="KW-0862">Zinc</keyword>
<organism>
    <name type="scientific">Saccharophagus degradans (strain 2-40 / ATCC 43961 / DSM 17024)</name>
    <dbReference type="NCBI Taxonomy" id="203122"/>
    <lineage>
        <taxon>Bacteria</taxon>
        <taxon>Pseudomonadati</taxon>
        <taxon>Pseudomonadota</taxon>
        <taxon>Gammaproteobacteria</taxon>
        <taxon>Cellvibrionales</taxon>
        <taxon>Cellvibrionaceae</taxon>
        <taxon>Saccharophagus</taxon>
    </lineage>
</organism>
<protein>
    <recommendedName>
        <fullName evidence="1">DNA ligase</fullName>
        <ecNumber evidence="1">6.5.1.2</ecNumber>
    </recommendedName>
    <alternativeName>
        <fullName evidence="1">Polydeoxyribonucleotide synthase [NAD(+)]</fullName>
    </alternativeName>
</protein>
<sequence length="674" mass="73569">MAASDAVLDKLESLKNQINYHNKLYYVLDAPELPDAEYDKLFQELQAIEQQFPELVTEDSPTQRVGAAPLDSFASIEHKRPMLSLDNVFNVEELFAFDKRIRDRINADASLEYSCEPKFDGIAASLLYENGRLKTAATRGDGTVGEDITQNMRTIGSVPLKLEGNNIPAVLEVRGEVYMPKAGFLRINEEALAKNEKTFVNPRNAAAGSLRQLNPQITAKRPLVFCAYNVGVVEGGELPATHYETLTQLFEWGFLVSEERRIAKGIEECEAYYHYLEAKRESLAYDIDGIVFKVNAFDLQERLGFVSRAPRWAIAHKFPAQEALTVLHDVEFQVGRTGAITPVAKLQPIFVGGVTVSNATLHNKDEIERLGIRVGDTVIVRRAGDVIPQIVSIVESKRPQDAREIKFPTACPVCGSDVESVEGEAAIRCTGGLVCEAQRKESIKHFASRQAMDIDGLGDKIVDQLVDNKLVNDVADLYTLDIPTLAGLERLGAKSAANLVAAIEASKQTSLDKILYALGIREVGRATARNLANHFCTLNKVMDATQEQLIEVTDVGPVVAHYVVDFFAQANNREVIEKLIAAGVNWPDIEKVDGVKPLEGTTYVLTGSLESLSRDEAKDKLQALGAKVSGSVSAKTTCVVAGPGAGSKLAKAEKLGLAILDEVGLLALLEEHGV</sequence>
<name>DNLJ_SACD2</name>
<dbReference type="EC" id="6.5.1.2" evidence="1"/>
<dbReference type="EMBL" id="CP000282">
    <property type="protein sequence ID" value="ABD81141.1"/>
    <property type="molecule type" value="Genomic_DNA"/>
</dbReference>
<dbReference type="RefSeq" id="WP_011468359.1">
    <property type="nucleotide sequence ID" value="NC_007912.1"/>
</dbReference>
<dbReference type="SMR" id="Q21JI8"/>
<dbReference type="STRING" id="203122.Sde_1881"/>
<dbReference type="GeneID" id="98613556"/>
<dbReference type="KEGG" id="sde:Sde_1881"/>
<dbReference type="eggNOG" id="COG0272">
    <property type="taxonomic scope" value="Bacteria"/>
</dbReference>
<dbReference type="HOGENOM" id="CLU_007764_2_1_6"/>
<dbReference type="OrthoDB" id="9759736at2"/>
<dbReference type="Proteomes" id="UP000001947">
    <property type="component" value="Chromosome"/>
</dbReference>
<dbReference type="GO" id="GO:0005829">
    <property type="term" value="C:cytosol"/>
    <property type="evidence" value="ECO:0007669"/>
    <property type="project" value="TreeGrafter"/>
</dbReference>
<dbReference type="GO" id="GO:0003677">
    <property type="term" value="F:DNA binding"/>
    <property type="evidence" value="ECO:0007669"/>
    <property type="project" value="InterPro"/>
</dbReference>
<dbReference type="GO" id="GO:0003911">
    <property type="term" value="F:DNA ligase (NAD+) activity"/>
    <property type="evidence" value="ECO:0007669"/>
    <property type="project" value="UniProtKB-UniRule"/>
</dbReference>
<dbReference type="GO" id="GO:0046872">
    <property type="term" value="F:metal ion binding"/>
    <property type="evidence" value="ECO:0007669"/>
    <property type="project" value="UniProtKB-KW"/>
</dbReference>
<dbReference type="GO" id="GO:0006281">
    <property type="term" value="P:DNA repair"/>
    <property type="evidence" value="ECO:0007669"/>
    <property type="project" value="UniProtKB-KW"/>
</dbReference>
<dbReference type="GO" id="GO:0006260">
    <property type="term" value="P:DNA replication"/>
    <property type="evidence" value="ECO:0007669"/>
    <property type="project" value="UniProtKB-KW"/>
</dbReference>
<dbReference type="CDD" id="cd17748">
    <property type="entry name" value="BRCT_DNA_ligase_like"/>
    <property type="match status" value="1"/>
</dbReference>
<dbReference type="CDD" id="cd00114">
    <property type="entry name" value="LIGANc"/>
    <property type="match status" value="1"/>
</dbReference>
<dbReference type="FunFam" id="1.10.150.20:FF:000006">
    <property type="entry name" value="DNA ligase"/>
    <property type="match status" value="1"/>
</dbReference>
<dbReference type="FunFam" id="1.10.150.20:FF:000007">
    <property type="entry name" value="DNA ligase"/>
    <property type="match status" value="1"/>
</dbReference>
<dbReference type="FunFam" id="1.10.287.610:FF:000002">
    <property type="entry name" value="DNA ligase"/>
    <property type="match status" value="1"/>
</dbReference>
<dbReference type="FunFam" id="2.40.50.140:FF:000012">
    <property type="entry name" value="DNA ligase"/>
    <property type="match status" value="1"/>
</dbReference>
<dbReference type="FunFam" id="3.30.470.30:FF:000001">
    <property type="entry name" value="DNA ligase"/>
    <property type="match status" value="1"/>
</dbReference>
<dbReference type="Gene3D" id="6.20.10.30">
    <property type="match status" value="1"/>
</dbReference>
<dbReference type="Gene3D" id="1.10.150.20">
    <property type="entry name" value="5' to 3' exonuclease, C-terminal subdomain"/>
    <property type="match status" value="2"/>
</dbReference>
<dbReference type="Gene3D" id="3.40.50.10190">
    <property type="entry name" value="BRCT domain"/>
    <property type="match status" value="1"/>
</dbReference>
<dbReference type="Gene3D" id="3.30.470.30">
    <property type="entry name" value="DNA ligase/mRNA capping enzyme"/>
    <property type="match status" value="1"/>
</dbReference>
<dbReference type="Gene3D" id="1.10.287.610">
    <property type="entry name" value="Helix hairpin bin"/>
    <property type="match status" value="1"/>
</dbReference>
<dbReference type="Gene3D" id="2.40.50.140">
    <property type="entry name" value="Nucleic acid-binding proteins"/>
    <property type="match status" value="1"/>
</dbReference>
<dbReference type="HAMAP" id="MF_01588">
    <property type="entry name" value="DNA_ligase_A"/>
    <property type="match status" value="1"/>
</dbReference>
<dbReference type="InterPro" id="IPR001357">
    <property type="entry name" value="BRCT_dom"/>
</dbReference>
<dbReference type="InterPro" id="IPR036420">
    <property type="entry name" value="BRCT_dom_sf"/>
</dbReference>
<dbReference type="InterPro" id="IPR041663">
    <property type="entry name" value="DisA/LigA_HHH"/>
</dbReference>
<dbReference type="InterPro" id="IPR001679">
    <property type="entry name" value="DNA_ligase"/>
</dbReference>
<dbReference type="InterPro" id="IPR018239">
    <property type="entry name" value="DNA_ligase_AS"/>
</dbReference>
<dbReference type="InterPro" id="IPR033136">
    <property type="entry name" value="DNA_ligase_CS"/>
</dbReference>
<dbReference type="InterPro" id="IPR013839">
    <property type="entry name" value="DNAligase_adenylation"/>
</dbReference>
<dbReference type="InterPro" id="IPR013840">
    <property type="entry name" value="DNAligase_N"/>
</dbReference>
<dbReference type="InterPro" id="IPR003583">
    <property type="entry name" value="Hlx-hairpin-Hlx_DNA-bd_motif"/>
</dbReference>
<dbReference type="InterPro" id="IPR012340">
    <property type="entry name" value="NA-bd_OB-fold"/>
</dbReference>
<dbReference type="InterPro" id="IPR004150">
    <property type="entry name" value="NAD_DNA_ligase_OB"/>
</dbReference>
<dbReference type="InterPro" id="IPR010994">
    <property type="entry name" value="RuvA_2-like"/>
</dbReference>
<dbReference type="InterPro" id="IPR004149">
    <property type="entry name" value="Znf_DNAligase_C4"/>
</dbReference>
<dbReference type="NCBIfam" id="TIGR00575">
    <property type="entry name" value="dnlj"/>
    <property type="match status" value="1"/>
</dbReference>
<dbReference type="NCBIfam" id="NF005932">
    <property type="entry name" value="PRK07956.1"/>
    <property type="match status" value="1"/>
</dbReference>
<dbReference type="PANTHER" id="PTHR23389">
    <property type="entry name" value="CHROMOSOME TRANSMISSION FIDELITY FACTOR 18"/>
    <property type="match status" value="1"/>
</dbReference>
<dbReference type="PANTHER" id="PTHR23389:SF9">
    <property type="entry name" value="DNA LIGASE"/>
    <property type="match status" value="1"/>
</dbReference>
<dbReference type="Pfam" id="PF00533">
    <property type="entry name" value="BRCT"/>
    <property type="match status" value="1"/>
</dbReference>
<dbReference type="Pfam" id="PF01653">
    <property type="entry name" value="DNA_ligase_aden"/>
    <property type="match status" value="1"/>
</dbReference>
<dbReference type="Pfam" id="PF03120">
    <property type="entry name" value="DNA_ligase_OB"/>
    <property type="match status" value="1"/>
</dbReference>
<dbReference type="Pfam" id="PF03119">
    <property type="entry name" value="DNA_ligase_ZBD"/>
    <property type="match status" value="1"/>
</dbReference>
<dbReference type="Pfam" id="PF12826">
    <property type="entry name" value="HHH_2"/>
    <property type="match status" value="1"/>
</dbReference>
<dbReference type="Pfam" id="PF14520">
    <property type="entry name" value="HHH_5"/>
    <property type="match status" value="1"/>
</dbReference>
<dbReference type="Pfam" id="PF22745">
    <property type="entry name" value="Nlig-Ia"/>
    <property type="match status" value="1"/>
</dbReference>
<dbReference type="PIRSF" id="PIRSF001604">
    <property type="entry name" value="LigA"/>
    <property type="match status" value="1"/>
</dbReference>
<dbReference type="SMART" id="SM00292">
    <property type="entry name" value="BRCT"/>
    <property type="match status" value="1"/>
</dbReference>
<dbReference type="SMART" id="SM00278">
    <property type="entry name" value="HhH1"/>
    <property type="match status" value="4"/>
</dbReference>
<dbReference type="SMART" id="SM00532">
    <property type="entry name" value="LIGANc"/>
    <property type="match status" value="1"/>
</dbReference>
<dbReference type="SUPFAM" id="SSF52113">
    <property type="entry name" value="BRCT domain"/>
    <property type="match status" value="1"/>
</dbReference>
<dbReference type="SUPFAM" id="SSF56091">
    <property type="entry name" value="DNA ligase/mRNA capping enzyme, catalytic domain"/>
    <property type="match status" value="1"/>
</dbReference>
<dbReference type="SUPFAM" id="SSF50249">
    <property type="entry name" value="Nucleic acid-binding proteins"/>
    <property type="match status" value="1"/>
</dbReference>
<dbReference type="SUPFAM" id="SSF47781">
    <property type="entry name" value="RuvA domain 2-like"/>
    <property type="match status" value="1"/>
</dbReference>
<dbReference type="PROSITE" id="PS50172">
    <property type="entry name" value="BRCT"/>
    <property type="match status" value="1"/>
</dbReference>
<dbReference type="PROSITE" id="PS01055">
    <property type="entry name" value="DNA_LIGASE_N1"/>
    <property type="match status" value="1"/>
</dbReference>
<dbReference type="PROSITE" id="PS01056">
    <property type="entry name" value="DNA_LIGASE_N2"/>
    <property type="match status" value="1"/>
</dbReference>
<feature type="chain" id="PRO_0000313415" description="DNA ligase">
    <location>
        <begin position="1"/>
        <end position="674"/>
    </location>
</feature>
<feature type="domain" description="BRCT" evidence="1">
    <location>
        <begin position="593"/>
        <end position="674"/>
    </location>
</feature>
<feature type="active site" description="N6-AMP-lysine intermediate" evidence="1">
    <location>
        <position position="118"/>
    </location>
</feature>
<feature type="binding site" evidence="1">
    <location>
        <begin position="35"/>
        <end position="39"/>
    </location>
    <ligand>
        <name>NAD(+)</name>
        <dbReference type="ChEBI" id="CHEBI:57540"/>
    </ligand>
</feature>
<feature type="binding site" evidence="1">
    <location>
        <begin position="84"/>
        <end position="85"/>
    </location>
    <ligand>
        <name>NAD(+)</name>
        <dbReference type="ChEBI" id="CHEBI:57540"/>
    </ligand>
</feature>
<feature type="binding site" evidence="1">
    <location>
        <position position="116"/>
    </location>
    <ligand>
        <name>NAD(+)</name>
        <dbReference type="ChEBI" id="CHEBI:57540"/>
    </ligand>
</feature>
<feature type="binding site" evidence="1">
    <location>
        <position position="139"/>
    </location>
    <ligand>
        <name>NAD(+)</name>
        <dbReference type="ChEBI" id="CHEBI:57540"/>
    </ligand>
</feature>
<feature type="binding site" evidence="1">
    <location>
        <position position="176"/>
    </location>
    <ligand>
        <name>NAD(+)</name>
        <dbReference type="ChEBI" id="CHEBI:57540"/>
    </ligand>
</feature>
<feature type="binding site" evidence="1">
    <location>
        <position position="293"/>
    </location>
    <ligand>
        <name>NAD(+)</name>
        <dbReference type="ChEBI" id="CHEBI:57540"/>
    </ligand>
</feature>
<feature type="binding site" evidence="1">
    <location>
        <position position="317"/>
    </location>
    <ligand>
        <name>NAD(+)</name>
        <dbReference type="ChEBI" id="CHEBI:57540"/>
    </ligand>
</feature>
<feature type="binding site" evidence="1">
    <location>
        <position position="411"/>
    </location>
    <ligand>
        <name>Zn(2+)</name>
        <dbReference type="ChEBI" id="CHEBI:29105"/>
    </ligand>
</feature>
<feature type="binding site" evidence="1">
    <location>
        <position position="414"/>
    </location>
    <ligand>
        <name>Zn(2+)</name>
        <dbReference type="ChEBI" id="CHEBI:29105"/>
    </ligand>
</feature>
<feature type="binding site" evidence="1">
    <location>
        <position position="429"/>
    </location>
    <ligand>
        <name>Zn(2+)</name>
        <dbReference type="ChEBI" id="CHEBI:29105"/>
    </ligand>
</feature>
<feature type="binding site" evidence="1">
    <location>
        <position position="435"/>
    </location>
    <ligand>
        <name>Zn(2+)</name>
        <dbReference type="ChEBI" id="CHEBI:29105"/>
    </ligand>
</feature>
<comment type="function">
    <text evidence="1">DNA ligase that catalyzes the formation of phosphodiester linkages between 5'-phosphoryl and 3'-hydroxyl groups in double-stranded DNA using NAD as a coenzyme and as the energy source for the reaction. It is essential for DNA replication and repair of damaged DNA.</text>
</comment>
<comment type="catalytic activity">
    <reaction evidence="1">
        <text>NAD(+) + (deoxyribonucleotide)n-3'-hydroxyl + 5'-phospho-(deoxyribonucleotide)m = (deoxyribonucleotide)n+m + AMP + beta-nicotinamide D-nucleotide.</text>
        <dbReference type="EC" id="6.5.1.2"/>
    </reaction>
</comment>
<comment type="cofactor">
    <cofactor evidence="1">
        <name>Mg(2+)</name>
        <dbReference type="ChEBI" id="CHEBI:18420"/>
    </cofactor>
    <cofactor evidence="1">
        <name>Mn(2+)</name>
        <dbReference type="ChEBI" id="CHEBI:29035"/>
    </cofactor>
</comment>
<comment type="similarity">
    <text evidence="1">Belongs to the NAD-dependent DNA ligase family. LigA subfamily.</text>
</comment>